<accession>Q8FZP5</accession>
<accession>G0KBI8</accession>
<name>DDLB_BRUSU</name>
<evidence type="ECO:0000250" key="1"/>
<evidence type="ECO:0000255" key="2">
    <source>
        <dbReference type="HAMAP-Rule" id="MF_00047"/>
    </source>
</evidence>
<sequence length="308" mass="33378">MTGKHVAVLMGGFSSERSVSLSSGVACATTLEECGYRVTRIDVDRNVASILVELKPDVVFNALHGPFGEDGAIQGVLEYLQIPYTHSGVLASALAMDKDRAKKVAAAAGVVVAPSRLMNRFDIGSQHPMKPPYVVKPVREGSSFGVVIVKEDQPHPPQVIGSADWKYGDEVMVEGYIAGRELTCAVMGDRAMDVCEIIPVGYQFYDYDSKYVAGASTHVSPAKILPNIYQKIQTMALTAHRAIGCRGVSRSDFRFDDRFSEEGEVVWLEINTQPGMTPTSLVPDIAKAAGISFAELLSWMVEDASCLR</sequence>
<gene>
    <name evidence="2" type="primary">ddlB</name>
    <name type="synonym">ddl</name>
    <name type="ordered locus">BR1428</name>
    <name type="ordered locus">BS1330_I1422</name>
</gene>
<dbReference type="EC" id="6.3.2.4" evidence="2"/>
<dbReference type="EMBL" id="AE014291">
    <property type="protein sequence ID" value="AAN30341.1"/>
    <property type="molecule type" value="Genomic_DNA"/>
</dbReference>
<dbReference type="EMBL" id="CP002997">
    <property type="protein sequence ID" value="AEM18757.1"/>
    <property type="molecule type" value="Genomic_DNA"/>
</dbReference>
<dbReference type="RefSeq" id="WP_004690987.1">
    <property type="nucleotide sequence ID" value="NZ_KN046804.1"/>
</dbReference>
<dbReference type="SMR" id="Q8FZP5"/>
<dbReference type="GeneID" id="45052439"/>
<dbReference type="KEGG" id="bms:BR1428"/>
<dbReference type="KEGG" id="bsi:BS1330_I1422"/>
<dbReference type="PATRIC" id="fig|204722.21.peg.915"/>
<dbReference type="HOGENOM" id="CLU_039268_1_1_5"/>
<dbReference type="PhylomeDB" id="Q8FZP5"/>
<dbReference type="UniPathway" id="UPA00219"/>
<dbReference type="Proteomes" id="UP000007104">
    <property type="component" value="Chromosome I"/>
</dbReference>
<dbReference type="GO" id="GO:0005737">
    <property type="term" value="C:cytoplasm"/>
    <property type="evidence" value="ECO:0007669"/>
    <property type="project" value="UniProtKB-SubCell"/>
</dbReference>
<dbReference type="GO" id="GO:0005524">
    <property type="term" value="F:ATP binding"/>
    <property type="evidence" value="ECO:0007669"/>
    <property type="project" value="UniProtKB-KW"/>
</dbReference>
<dbReference type="GO" id="GO:0008716">
    <property type="term" value="F:D-alanine-D-alanine ligase activity"/>
    <property type="evidence" value="ECO:0007669"/>
    <property type="project" value="UniProtKB-UniRule"/>
</dbReference>
<dbReference type="GO" id="GO:0046872">
    <property type="term" value="F:metal ion binding"/>
    <property type="evidence" value="ECO:0007669"/>
    <property type="project" value="UniProtKB-KW"/>
</dbReference>
<dbReference type="GO" id="GO:0071555">
    <property type="term" value="P:cell wall organization"/>
    <property type="evidence" value="ECO:0007669"/>
    <property type="project" value="UniProtKB-KW"/>
</dbReference>
<dbReference type="GO" id="GO:0009252">
    <property type="term" value="P:peptidoglycan biosynthetic process"/>
    <property type="evidence" value="ECO:0007669"/>
    <property type="project" value="UniProtKB-UniRule"/>
</dbReference>
<dbReference type="GO" id="GO:0008360">
    <property type="term" value="P:regulation of cell shape"/>
    <property type="evidence" value="ECO:0007669"/>
    <property type="project" value="UniProtKB-KW"/>
</dbReference>
<dbReference type="Gene3D" id="3.40.50.20">
    <property type="match status" value="1"/>
</dbReference>
<dbReference type="Gene3D" id="3.30.1490.20">
    <property type="entry name" value="ATP-grasp fold, A domain"/>
    <property type="match status" value="1"/>
</dbReference>
<dbReference type="Gene3D" id="3.30.470.20">
    <property type="entry name" value="ATP-grasp fold, B domain"/>
    <property type="match status" value="1"/>
</dbReference>
<dbReference type="HAMAP" id="MF_00047">
    <property type="entry name" value="Dala_Dala_lig"/>
    <property type="match status" value="1"/>
</dbReference>
<dbReference type="InterPro" id="IPR011761">
    <property type="entry name" value="ATP-grasp"/>
</dbReference>
<dbReference type="InterPro" id="IPR013815">
    <property type="entry name" value="ATP_grasp_subdomain_1"/>
</dbReference>
<dbReference type="InterPro" id="IPR000291">
    <property type="entry name" value="D-Ala_lig_Van_CS"/>
</dbReference>
<dbReference type="InterPro" id="IPR005905">
    <property type="entry name" value="D_ala_D_ala"/>
</dbReference>
<dbReference type="InterPro" id="IPR011095">
    <property type="entry name" value="Dala_Dala_lig_C"/>
</dbReference>
<dbReference type="InterPro" id="IPR011127">
    <property type="entry name" value="Dala_Dala_lig_N"/>
</dbReference>
<dbReference type="InterPro" id="IPR016185">
    <property type="entry name" value="PreATP-grasp_dom_sf"/>
</dbReference>
<dbReference type="NCBIfam" id="TIGR01205">
    <property type="entry name" value="D_ala_D_alaTIGR"/>
    <property type="match status" value="1"/>
</dbReference>
<dbReference type="NCBIfam" id="NF002378">
    <property type="entry name" value="PRK01372.1"/>
    <property type="match status" value="1"/>
</dbReference>
<dbReference type="PANTHER" id="PTHR23132">
    <property type="entry name" value="D-ALANINE--D-ALANINE LIGASE"/>
    <property type="match status" value="1"/>
</dbReference>
<dbReference type="PANTHER" id="PTHR23132:SF23">
    <property type="entry name" value="D-ALANINE--D-ALANINE LIGASE B"/>
    <property type="match status" value="1"/>
</dbReference>
<dbReference type="Pfam" id="PF07478">
    <property type="entry name" value="Dala_Dala_lig_C"/>
    <property type="match status" value="1"/>
</dbReference>
<dbReference type="Pfam" id="PF01820">
    <property type="entry name" value="Dala_Dala_lig_N"/>
    <property type="match status" value="1"/>
</dbReference>
<dbReference type="PIRSF" id="PIRSF039102">
    <property type="entry name" value="Ddl/VanB"/>
    <property type="match status" value="1"/>
</dbReference>
<dbReference type="SUPFAM" id="SSF56059">
    <property type="entry name" value="Glutathione synthetase ATP-binding domain-like"/>
    <property type="match status" value="1"/>
</dbReference>
<dbReference type="SUPFAM" id="SSF52440">
    <property type="entry name" value="PreATP-grasp domain"/>
    <property type="match status" value="1"/>
</dbReference>
<dbReference type="PROSITE" id="PS50975">
    <property type="entry name" value="ATP_GRASP"/>
    <property type="match status" value="1"/>
</dbReference>
<dbReference type="PROSITE" id="PS00843">
    <property type="entry name" value="DALA_DALA_LIGASE_1"/>
    <property type="match status" value="1"/>
</dbReference>
<dbReference type="PROSITE" id="PS00844">
    <property type="entry name" value="DALA_DALA_LIGASE_2"/>
    <property type="match status" value="1"/>
</dbReference>
<keyword id="KW-0067">ATP-binding</keyword>
<keyword id="KW-0133">Cell shape</keyword>
<keyword id="KW-0961">Cell wall biogenesis/degradation</keyword>
<keyword id="KW-0963">Cytoplasm</keyword>
<keyword id="KW-0436">Ligase</keyword>
<keyword id="KW-0460">Magnesium</keyword>
<keyword id="KW-0464">Manganese</keyword>
<keyword id="KW-0479">Metal-binding</keyword>
<keyword id="KW-0547">Nucleotide-binding</keyword>
<keyword id="KW-0573">Peptidoglycan synthesis</keyword>
<proteinExistence type="inferred from homology"/>
<reference key="1">
    <citation type="journal article" date="2002" name="Proc. Natl. Acad. Sci. U.S.A.">
        <title>The Brucella suis genome reveals fundamental similarities between animal and plant pathogens and symbionts.</title>
        <authorList>
            <person name="Paulsen I.T."/>
            <person name="Seshadri R."/>
            <person name="Nelson K.E."/>
            <person name="Eisen J.A."/>
            <person name="Heidelberg J.F."/>
            <person name="Read T.D."/>
            <person name="Dodson R.J."/>
            <person name="Umayam L.A."/>
            <person name="Brinkac L.M."/>
            <person name="Beanan M.J."/>
            <person name="Daugherty S.C."/>
            <person name="DeBoy R.T."/>
            <person name="Durkin A.S."/>
            <person name="Kolonay J.F."/>
            <person name="Madupu R."/>
            <person name="Nelson W.C."/>
            <person name="Ayodeji B."/>
            <person name="Kraul M."/>
            <person name="Shetty J."/>
            <person name="Malek J.A."/>
            <person name="Van Aken S.E."/>
            <person name="Riedmuller S."/>
            <person name="Tettelin H."/>
            <person name="Gill S.R."/>
            <person name="White O."/>
            <person name="Salzberg S.L."/>
            <person name="Hoover D.L."/>
            <person name="Lindler L.E."/>
            <person name="Halling S.M."/>
            <person name="Boyle S.M."/>
            <person name="Fraser C.M."/>
        </authorList>
    </citation>
    <scope>NUCLEOTIDE SEQUENCE [LARGE SCALE GENOMIC DNA]</scope>
    <source>
        <strain>1330</strain>
    </source>
</reference>
<reference key="2">
    <citation type="journal article" date="2011" name="J. Bacteriol.">
        <title>Revised genome sequence of Brucella suis 1330.</title>
        <authorList>
            <person name="Tae H."/>
            <person name="Shallom S."/>
            <person name="Settlage R."/>
            <person name="Preston D."/>
            <person name="Adams L.G."/>
            <person name="Garner H.R."/>
        </authorList>
    </citation>
    <scope>NUCLEOTIDE SEQUENCE [LARGE SCALE GENOMIC DNA]</scope>
    <source>
        <strain>1330</strain>
    </source>
</reference>
<feature type="chain" id="PRO_0000177797" description="D-alanine--D-alanine ligase B">
    <location>
        <begin position="1"/>
        <end position="308"/>
    </location>
</feature>
<feature type="domain" description="ATP-grasp" evidence="2">
    <location>
        <begin position="102"/>
        <end position="302"/>
    </location>
</feature>
<feature type="binding site" evidence="2">
    <location>
        <begin position="128"/>
        <end position="183"/>
    </location>
    <ligand>
        <name>ATP</name>
        <dbReference type="ChEBI" id="CHEBI:30616"/>
    </ligand>
</feature>
<feature type="binding site" evidence="2">
    <location>
        <position position="252"/>
    </location>
    <ligand>
        <name>Mg(2+)</name>
        <dbReference type="ChEBI" id="CHEBI:18420"/>
        <label>1</label>
    </ligand>
</feature>
<feature type="binding site" evidence="2">
    <location>
        <position position="269"/>
    </location>
    <ligand>
        <name>Mg(2+)</name>
        <dbReference type="ChEBI" id="CHEBI:18420"/>
        <label>1</label>
    </ligand>
</feature>
<feature type="binding site" evidence="2">
    <location>
        <position position="269"/>
    </location>
    <ligand>
        <name>Mg(2+)</name>
        <dbReference type="ChEBI" id="CHEBI:18420"/>
        <label>2</label>
    </ligand>
</feature>
<feature type="binding site" evidence="2">
    <location>
        <position position="271"/>
    </location>
    <ligand>
        <name>Mg(2+)</name>
        <dbReference type="ChEBI" id="CHEBI:18420"/>
        <label>2</label>
    </ligand>
</feature>
<organism>
    <name type="scientific">Brucella suis biovar 1 (strain 1330)</name>
    <dbReference type="NCBI Taxonomy" id="204722"/>
    <lineage>
        <taxon>Bacteria</taxon>
        <taxon>Pseudomonadati</taxon>
        <taxon>Pseudomonadota</taxon>
        <taxon>Alphaproteobacteria</taxon>
        <taxon>Hyphomicrobiales</taxon>
        <taxon>Brucellaceae</taxon>
        <taxon>Brucella/Ochrobactrum group</taxon>
        <taxon>Brucella</taxon>
    </lineage>
</organism>
<protein>
    <recommendedName>
        <fullName evidence="2">D-alanine--D-alanine ligase B</fullName>
        <ecNumber evidence="2">6.3.2.4</ecNumber>
    </recommendedName>
    <alternativeName>
        <fullName evidence="2">D-Ala-D-Ala ligase B</fullName>
    </alternativeName>
    <alternativeName>
        <fullName evidence="2">D-alanylalanine synthetase B</fullName>
    </alternativeName>
</protein>
<comment type="function">
    <text evidence="2">Cell wall formation.</text>
</comment>
<comment type="catalytic activity">
    <reaction evidence="2">
        <text>2 D-alanine + ATP = D-alanyl-D-alanine + ADP + phosphate + H(+)</text>
        <dbReference type="Rhea" id="RHEA:11224"/>
        <dbReference type="ChEBI" id="CHEBI:15378"/>
        <dbReference type="ChEBI" id="CHEBI:30616"/>
        <dbReference type="ChEBI" id="CHEBI:43474"/>
        <dbReference type="ChEBI" id="CHEBI:57416"/>
        <dbReference type="ChEBI" id="CHEBI:57822"/>
        <dbReference type="ChEBI" id="CHEBI:456216"/>
        <dbReference type="EC" id="6.3.2.4"/>
    </reaction>
</comment>
<comment type="cofactor">
    <cofactor evidence="1">
        <name>Mg(2+)</name>
        <dbReference type="ChEBI" id="CHEBI:18420"/>
    </cofactor>
    <cofactor evidence="1">
        <name>Mn(2+)</name>
        <dbReference type="ChEBI" id="CHEBI:29035"/>
    </cofactor>
    <text evidence="1">Binds 2 magnesium or manganese ions per subunit.</text>
</comment>
<comment type="pathway">
    <text evidence="2">Cell wall biogenesis; peptidoglycan biosynthesis.</text>
</comment>
<comment type="subcellular location">
    <subcellularLocation>
        <location evidence="2">Cytoplasm</location>
    </subcellularLocation>
</comment>
<comment type="similarity">
    <text evidence="2">Belongs to the D-alanine--D-alanine ligase family.</text>
</comment>